<comment type="function">
    <text evidence="1">Involved in unsaturated fatty acids biosynthesis. Catalyzes the dehydration of short chain beta-hydroxyacyl-ACPs and long chain saturated and unsaturated beta-hydroxyacyl-ACPs.</text>
</comment>
<comment type="catalytic activity">
    <reaction evidence="1">
        <text>a (3R)-hydroxyacyl-[ACP] = a (2E)-enoyl-[ACP] + H2O</text>
        <dbReference type="Rhea" id="RHEA:13097"/>
        <dbReference type="Rhea" id="RHEA-COMP:9925"/>
        <dbReference type="Rhea" id="RHEA-COMP:9945"/>
        <dbReference type="ChEBI" id="CHEBI:15377"/>
        <dbReference type="ChEBI" id="CHEBI:78784"/>
        <dbReference type="ChEBI" id="CHEBI:78827"/>
        <dbReference type="EC" id="4.2.1.59"/>
    </reaction>
</comment>
<comment type="subunit">
    <text evidence="1">Oligomer.</text>
</comment>
<comment type="subcellular location">
    <subcellularLocation>
        <location evidence="1">Cytoplasm</location>
    </subcellularLocation>
</comment>
<comment type="PTM">
    <text evidence="1">The N-terminus is blocked.</text>
</comment>
<comment type="similarity">
    <text evidence="1">Belongs to the thioester dehydratase family. FabZ subfamily.</text>
</comment>
<organism>
    <name type="scientific">Escherichia coli (strain 55989 / EAEC)</name>
    <dbReference type="NCBI Taxonomy" id="585055"/>
    <lineage>
        <taxon>Bacteria</taxon>
        <taxon>Pseudomonadati</taxon>
        <taxon>Pseudomonadota</taxon>
        <taxon>Gammaproteobacteria</taxon>
        <taxon>Enterobacterales</taxon>
        <taxon>Enterobacteriaceae</taxon>
        <taxon>Escherichia</taxon>
    </lineage>
</organism>
<evidence type="ECO:0000255" key="1">
    <source>
        <dbReference type="HAMAP-Rule" id="MF_00406"/>
    </source>
</evidence>
<name>FABZ_ECO55</name>
<keyword id="KW-0963">Cytoplasm</keyword>
<keyword id="KW-0441">Lipid A biosynthesis</keyword>
<keyword id="KW-0444">Lipid biosynthesis</keyword>
<keyword id="KW-0443">Lipid metabolism</keyword>
<keyword id="KW-0456">Lyase</keyword>
<keyword id="KW-1185">Reference proteome</keyword>
<reference key="1">
    <citation type="journal article" date="2009" name="PLoS Genet.">
        <title>Organised genome dynamics in the Escherichia coli species results in highly diverse adaptive paths.</title>
        <authorList>
            <person name="Touchon M."/>
            <person name="Hoede C."/>
            <person name="Tenaillon O."/>
            <person name="Barbe V."/>
            <person name="Baeriswyl S."/>
            <person name="Bidet P."/>
            <person name="Bingen E."/>
            <person name="Bonacorsi S."/>
            <person name="Bouchier C."/>
            <person name="Bouvet O."/>
            <person name="Calteau A."/>
            <person name="Chiapello H."/>
            <person name="Clermont O."/>
            <person name="Cruveiller S."/>
            <person name="Danchin A."/>
            <person name="Diard M."/>
            <person name="Dossat C."/>
            <person name="Karoui M.E."/>
            <person name="Frapy E."/>
            <person name="Garry L."/>
            <person name="Ghigo J.M."/>
            <person name="Gilles A.M."/>
            <person name="Johnson J."/>
            <person name="Le Bouguenec C."/>
            <person name="Lescat M."/>
            <person name="Mangenot S."/>
            <person name="Martinez-Jehanne V."/>
            <person name="Matic I."/>
            <person name="Nassif X."/>
            <person name="Oztas S."/>
            <person name="Petit M.A."/>
            <person name="Pichon C."/>
            <person name="Rouy Z."/>
            <person name="Ruf C.S."/>
            <person name="Schneider D."/>
            <person name="Tourret J."/>
            <person name="Vacherie B."/>
            <person name="Vallenet D."/>
            <person name="Medigue C."/>
            <person name="Rocha E.P.C."/>
            <person name="Denamur E."/>
        </authorList>
    </citation>
    <scope>NUCLEOTIDE SEQUENCE [LARGE SCALE GENOMIC DNA]</scope>
    <source>
        <strain>55989 / EAEC</strain>
    </source>
</reference>
<gene>
    <name evidence="1" type="primary">fabZ</name>
    <name type="ordered locus">EC55989_0174</name>
</gene>
<proteinExistence type="inferred from homology"/>
<sequence length="151" mass="17033">MTTNTHTLQIEEILELLPHRFPFLLVDRVLDFEEGRFLRAVKNVSVNEPFFQGHFPGKPIFPGVLILEAMAQATGILAFKSVGKLEPGELYYFAGIDEARFKRPVVPGDQMIMEVTFEKTRRGLTRFKGVALVDGKVVCEATMMCARSREA</sequence>
<protein>
    <recommendedName>
        <fullName evidence="1">3-hydroxyacyl-[acyl-carrier-protein] dehydratase FabZ</fullName>
        <ecNumber evidence="1">4.2.1.59</ecNumber>
    </recommendedName>
    <alternativeName>
        <fullName evidence="1">(3R)-hydroxymyristoyl-[acyl-carrier-protein] dehydratase</fullName>
        <shortName evidence="1">(3R)-hydroxymyristoyl-ACP dehydrase</shortName>
    </alternativeName>
    <alternativeName>
        <fullName evidence="1">Beta-hydroxyacyl-ACP dehydratase</fullName>
    </alternativeName>
</protein>
<feature type="chain" id="PRO_1000134700" description="3-hydroxyacyl-[acyl-carrier-protein] dehydratase FabZ">
    <location>
        <begin position="1"/>
        <end position="151"/>
    </location>
</feature>
<feature type="active site" evidence="1">
    <location>
        <position position="54"/>
    </location>
</feature>
<dbReference type="EC" id="4.2.1.59" evidence="1"/>
<dbReference type="EMBL" id="CU928145">
    <property type="protein sequence ID" value="CAU96060.1"/>
    <property type="molecule type" value="Genomic_DNA"/>
</dbReference>
<dbReference type="RefSeq" id="WP_000210739.1">
    <property type="nucleotide sequence ID" value="NZ_CP028304.1"/>
</dbReference>
<dbReference type="SMR" id="B7LGP2"/>
<dbReference type="GeneID" id="93777245"/>
<dbReference type="KEGG" id="eck:EC55989_0174"/>
<dbReference type="HOGENOM" id="CLU_078912_1_0_6"/>
<dbReference type="Proteomes" id="UP000000746">
    <property type="component" value="Chromosome"/>
</dbReference>
<dbReference type="GO" id="GO:0005737">
    <property type="term" value="C:cytoplasm"/>
    <property type="evidence" value="ECO:0007669"/>
    <property type="project" value="UniProtKB-SubCell"/>
</dbReference>
<dbReference type="GO" id="GO:0016020">
    <property type="term" value="C:membrane"/>
    <property type="evidence" value="ECO:0007669"/>
    <property type="project" value="GOC"/>
</dbReference>
<dbReference type="GO" id="GO:0019171">
    <property type="term" value="F:(3R)-hydroxyacyl-[acyl-carrier-protein] dehydratase activity"/>
    <property type="evidence" value="ECO:0007669"/>
    <property type="project" value="UniProtKB-EC"/>
</dbReference>
<dbReference type="GO" id="GO:0006633">
    <property type="term" value="P:fatty acid biosynthetic process"/>
    <property type="evidence" value="ECO:0007669"/>
    <property type="project" value="UniProtKB-UniRule"/>
</dbReference>
<dbReference type="GO" id="GO:0009245">
    <property type="term" value="P:lipid A biosynthetic process"/>
    <property type="evidence" value="ECO:0007669"/>
    <property type="project" value="UniProtKB-UniRule"/>
</dbReference>
<dbReference type="CDD" id="cd01288">
    <property type="entry name" value="FabZ"/>
    <property type="match status" value="1"/>
</dbReference>
<dbReference type="FunFam" id="3.10.129.10:FF:000001">
    <property type="entry name" value="3-hydroxyacyl-[acyl-carrier-protein] dehydratase FabZ"/>
    <property type="match status" value="1"/>
</dbReference>
<dbReference type="Gene3D" id="3.10.129.10">
    <property type="entry name" value="Hotdog Thioesterase"/>
    <property type="match status" value="1"/>
</dbReference>
<dbReference type="HAMAP" id="MF_00406">
    <property type="entry name" value="FabZ"/>
    <property type="match status" value="1"/>
</dbReference>
<dbReference type="InterPro" id="IPR013114">
    <property type="entry name" value="FabA_FabZ"/>
</dbReference>
<dbReference type="InterPro" id="IPR010084">
    <property type="entry name" value="FabZ"/>
</dbReference>
<dbReference type="InterPro" id="IPR029069">
    <property type="entry name" value="HotDog_dom_sf"/>
</dbReference>
<dbReference type="NCBIfam" id="TIGR01750">
    <property type="entry name" value="fabZ"/>
    <property type="match status" value="1"/>
</dbReference>
<dbReference type="NCBIfam" id="NF000582">
    <property type="entry name" value="PRK00006.1"/>
    <property type="match status" value="1"/>
</dbReference>
<dbReference type="PANTHER" id="PTHR30272">
    <property type="entry name" value="3-HYDROXYACYL-[ACYL-CARRIER-PROTEIN] DEHYDRATASE"/>
    <property type="match status" value="1"/>
</dbReference>
<dbReference type="PANTHER" id="PTHR30272:SF1">
    <property type="entry name" value="3-HYDROXYACYL-[ACYL-CARRIER-PROTEIN] DEHYDRATASE"/>
    <property type="match status" value="1"/>
</dbReference>
<dbReference type="Pfam" id="PF07977">
    <property type="entry name" value="FabA"/>
    <property type="match status" value="1"/>
</dbReference>
<dbReference type="SUPFAM" id="SSF54637">
    <property type="entry name" value="Thioesterase/thiol ester dehydrase-isomerase"/>
    <property type="match status" value="1"/>
</dbReference>
<accession>B7LGP2</accession>